<protein>
    <recommendedName>
        <fullName>Beta-glucosyl-HMC-alpha-glucosyl-transferase</fullName>
        <ecNumber>2.4.1.-</ecNumber>
    </recommendedName>
</protein>
<accession>Q06717</accession>
<sequence>MIQFVIPSYQHVGAVSALDMFPTDYEPHIVVREHEEKAYYDAYGSRAKIITIPDDVNGIAGTRKAITDMYAGQRIWMIDDDTTIRMSSMRKRDDRRCVDKVNQLTREQFYELIQYVEDAMDCGYYHGHARLPIFKITSSWGNYRENSYGFTNTWYDLGKLTTEQIGYGKIDLCEDMYAFLNLINQGYPHLALFKYLVVSGKAQAPGGCSSIRSNSKHNRALEQINREFPEQARWKTSNIEKRKSLGEEDESLKVLRMCVSRKEKSEAFHKFNAIHPIAVD</sequence>
<proteinExistence type="predicted"/>
<reference key="1">
    <citation type="journal article" date="1993" name="Nucleic Acids Res.">
        <title>Cloning and sequencing of the genes of beta-glucosyl-HMC-alpha-glucosyl-transferases of bacteriophages T2 and T6.</title>
        <authorList>
            <person name="Winkler M."/>
            <person name="Rueger W."/>
        </authorList>
    </citation>
    <scope>NUCLEOTIDE SEQUENCE [GENOMIC DNA]</scope>
</reference>
<comment type="function">
    <text>Transfers a gentiobiosyl-group on a hydroxymethylcytosine residue in DNA. Is involved in a DNA modification process to protects the phage genome against its own nucleases and the host restriction endonuclease system.</text>
</comment>
<comment type="pathway">
    <text>Genetic information processing; DNA modification.</text>
</comment>
<keyword id="KW-0328">Glycosyltransferase</keyword>
<keyword id="KW-0808">Transferase</keyword>
<feature type="chain" id="PRO_0000164943" description="Beta-glucosyl-HMC-alpha-glucosyl-transferase">
    <location>
        <begin position="1"/>
        <end position="280"/>
    </location>
</feature>
<dbReference type="EC" id="2.4.1.-"/>
<dbReference type="EMBL" id="X68724">
    <property type="protein sequence ID" value="CAA48664.1"/>
    <property type="molecule type" value="Genomic_DNA"/>
</dbReference>
<dbReference type="PIR" id="S35623">
    <property type="entry name" value="S35623"/>
</dbReference>
<dbReference type="RefSeq" id="YP_010073690.1">
    <property type="nucleotide sequence ID" value="NC_054931.1"/>
</dbReference>
<dbReference type="GeneID" id="65062440"/>
<dbReference type="UniPathway" id="UPA00198"/>
<dbReference type="GO" id="GO:0016757">
    <property type="term" value="F:glycosyltransferase activity"/>
    <property type="evidence" value="ECO:0007669"/>
    <property type="project" value="UniProtKB-KW"/>
</dbReference>
<dbReference type="GO" id="GO:0006304">
    <property type="term" value="P:DNA modification"/>
    <property type="evidence" value="ECO:0007669"/>
    <property type="project" value="UniProtKB-UniPathway"/>
</dbReference>
<dbReference type="InterPro" id="IPR049100">
    <property type="entry name" value="TAGT"/>
</dbReference>
<dbReference type="Pfam" id="PF20691">
    <property type="entry name" value="TAGT"/>
    <property type="match status" value="1"/>
</dbReference>
<organism>
    <name type="scientific">Enterobacteria phage T2</name>
    <name type="common">Bacteriophage T2</name>
    <dbReference type="NCBI Taxonomy" id="2060721"/>
    <lineage>
        <taxon>Viruses</taxon>
        <taxon>Duplodnaviria</taxon>
        <taxon>Heunggongvirae</taxon>
        <taxon>Uroviricota</taxon>
        <taxon>Caudoviricetes</taxon>
        <taxon>Straboviridae</taxon>
        <taxon>Tevenvirinae</taxon>
        <taxon>Tequatrovirus</taxon>
        <taxon>Tequatrovirus T2</taxon>
    </lineage>
</organism>
<name>GSTG_BPT2</name>
<organismHost>
    <name type="scientific">Escherichia coli</name>
    <dbReference type="NCBI Taxonomy" id="562"/>
</organismHost>